<evidence type="ECO:0000255" key="1">
    <source>
        <dbReference type="HAMAP-Rule" id="MF_01241"/>
    </source>
</evidence>
<gene>
    <name evidence="1" type="primary">nagB</name>
    <name type="ordered locus">YPN_1113</name>
    <name type="ORF">YP516_1215</name>
</gene>
<keyword id="KW-0021">Allosteric enzyme</keyword>
<keyword id="KW-0119">Carbohydrate metabolism</keyword>
<keyword id="KW-0378">Hydrolase</keyword>
<organism>
    <name type="scientific">Yersinia pestis bv. Antiqua (strain Nepal516)</name>
    <dbReference type="NCBI Taxonomy" id="377628"/>
    <lineage>
        <taxon>Bacteria</taxon>
        <taxon>Pseudomonadati</taxon>
        <taxon>Pseudomonadota</taxon>
        <taxon>Gammaproteobacteria</taxon>
        <taxon>Enterobacterales</taxon>
        <taxon>Yersiniaceae</taxon>
        <taxon>Yersinia</taxon>
    </lineage>
</organism>
<proteinExistence type="inferred from homology"/>
<reference key="1">
    <citation type="journal article" date="2006" name="J. Bacteriol.">
        <title>Complete genome sequence of Yersinia pestis strains Antiqua and Nepal516: evidence of gene reduction in an emerging pathogen.</title>
        <authorList>
            <person name="Chain P.S.G."/>
            <person name="Hu P."/>
            <person name="Malfatti S.A."/>
            <person name="Radnedge L."/>
            <person name="Larimer F."/>
            <person name="Vergez L.M."/>
            <person name="Worsham P."/>
            <person name="Chu M.C."/>
            <person name="Andersen G.L."/>
        </authorList>
    </citation>
    <scope>NUCLEOTIDE SEQUENCE [LARGE SCALE GENOMIC DNA]</scope>
    <source>
        <strain>Nepal516</strain>
    </source>
</reference>
<reference key="2">
    <citation type="submission" date="2009-04" db="EMBL/GenBank/DDBJ databases">
        <title>Yersinia pestis Nepal516A whole genome shotgun sequencing project.</title>
        <authorList>
            <person name="Plunkett G. III"/>
            <person name="Anderson B.D."/>
            <person name="Baumler D.J."/>
            <person name="Burland V."/>
            <person name="Cabot E.L."/>
            <person name="Glasner J.D."/>
            <person name="Mau B."/>
            <person name="Neeno-Eckwall E."/>
            <person name="Perna N.T."/>
            <person name="Munk A.C."/>
            <person name="Tapia R."/>
            <person name="Green L.D."/>
            <person name="Rogers Y.C."/>
            <person name="Detter J.C."/>
            <person name="Bruce D.C."/>
            <person name="Brettin T.S."/>
        </authorList>
    </citation>
    <scope>NUCLEOTIDE SEQUENCE [LARGE SCALE GENOMIC DNA]</scope>
    <source>
        <strain>Nepal516</strain>
    </source>
</reference>
<feature type="chain" id="PRO_1000067039" description="Glucosamine-6-phosphate deaminase">
    <location>
        <begin position="1"/>
        <end position="266"/>
    </location>
</feature>
<feature type="active site" description="Proton acceptor; for enolization step" evidence="1">
    <location>
        <position position="72"/>
    </location>
</feature>
<feature type="active site" description="For ring-opening step" evidence="1">
    <location>
        <position position="141"/>
    </location>
</feature>
<feature type="active site" description="Proton acceptor; for ring-opening step" evidence="1">
    <location>
        <position position="143"/>
    </location>
</feature>
<feature type="active site" description="For ring-opening step" evidence="1">
    <location>
        <position position="148"/>
    </location>
</feature>
<feature type="site" description="Part of the allosteric site" evidence="1">
    <location>
        <position position="151"/>
    </location>
</feature>
<feature type="site" description="Part of the allosteric site" evidence="1">
    <location>
        <position position="158"/>
    </location>
</feature>
<feature type="site" description="Part of the allosteric site" evidence="1">
    <location>
        <position position="160"/>
    </location>
</feature>
<feature type="site" description="Part of the allosteric site" evidence="1">
    <location>
        <position position="161"/>
    </location>
</feature>
<feature type="site" description="Part of the allosteric site" evidence="1">
    <location>
        <position position="254"/>
    </location>
</feature>
<sequence length="266" mass="29667">MRLIPLRNTAEVGKWAARHIVNRINAFKPTAERPFILGLPTGGTPMEAYKYLIAMHKAGEVSFKHVVTFNMDEYVGLPKEHPESYYTFMHTNFFDHVDIPAENINLLNGNAADIDAECRRYEEKIKSYGKIHLFMGGVGVDGHIAFNEPASSLASRTRIKTLTQETRIANSRFFGGDANLVPKYALTVGVGTLLDAEEVMILVTGHGKAQALQAAVEGSINHMWTISCLQLHAKAIMVCDEPSTMELKVKTVKYFRELEAENVKDL</sequence>
<comment type="function">
    <text evidence="1">Catalyzes the reversible isomerization-deamination of glucosamine 6-phosphate (GlcN6P) to form fructose 6-phosphate (Fru6P) and ammonium ion.</text>
</comment>
<comment type="catalytic activity">
    <reaction evidence="1">
        <text>alpha-D-glucosamine 6-phosphate + H2O = beta-D-fructose 6-phosphate + NH4(+)</text>
        <dbReference type="Rhea" id="RHEA:12172"/>
        <dbReference type="ChEBI" id="CHEBI:15377"/>
        <dbReference type="ChEBI" id="CHEBI:28938"/>
        <dbReference type="ChEBI" id="CHEBI:57634"/>
        <dbReference type="ChEBI" id="CHEBI:75989"/>
        <dbReference type="EC" id="3.5.99.6"/>
    </reaction>
</comment>
<comment type="activity regulation">
    <text evidence="1">Allosterically activated by N-acetylglucosamine 6-phosphate (GlcNAc6P).</text>
</comment>
<comment type="pathway">
    <text evidence="1">Amino-sugar metabolism; N-acetylneuraminate degradation; D-fructose 6-phosphate from N-acetylneuraminate: step 5/5.</text>
</comment>
<comment type="subunit">
    <text evidence="1">Homohexamer.</text>
</comment>
<comment type="similarity">
    <text evidence="1">Belongs to the glucosamine/galactosamine-6-phosphate isomerase family. NagB subfamily.</text>
</comment>
<protein>
    <recommendedName>
        <fullName evidence="1">Glucosamine-6-phosphate deaminase</fullName>
        <ecNumber evidence="1">3.5.99.6</ecNumber>
    </recommendedName>
    <alternativeName>
        <fullName evidence="1">GlcN6P deaminase</fullName>
        <shortName evidence="1">GNPDA</shortName>
    </alternativeName>
    <alternativeName>
        <fullName evidence="1">Glucosamine-6-phosphate isomerase</fullName>
    </alternativeName>
</protein>
<name>NAGB_YERPN</name>
<dbReference type="EC" id="3.5.99.6" evidence="1"/>
<dbReference type="EMBL" id="CP000305">
    <property type="protein sequence ID" value="ABG17443.1"/>
    <property type="molecule type" value="Genomic_DNA"/>
</dbReference>
<dbReference type="EMBL" id="ACNQ01000008">
    <property type="protein sequence ID" value="EEO77539.1"/>
    <property type="molecule type" value="Genomic_DNA"/>
</dbReference>
<dbReference type="RefSeq" id="WP_002210352.1">
    <property type="nucleotide sequence ID" value="NZ_ACNQ01000008.1"/>
</dbReference>
<dbReference type="SMR" id="Q1CKN7"/>
<dbReference type="GeneID" id="57976064"/>
<dbReference type="KEGG" id="ypn:YPN_1113"/>
<dbReference type="HOGENOM" id="CLU_049611_0_1_6"/>
<dbReference type="UniPathway" id="UPA00629">
    <property type="reaction ID" value="UER00684"/>
</dbReference>
<dbReference type="Proteomes" id="UP000008936">
    <property type="component" value="Chromosome"/>
</dbReference>
<dbReference type="GO" id="GO:0005737">
    <property type="term" value="C:cytoplasm"/>
    <property type="evidence" value="ECO:0007669"/>
    <property type="project" value="TreeGrafter"/>
</dbReference>
<dbReference type="GO" id="GO:0004342">
    <property type="term" value="F:glucosamine-6-phosphate deaminase activity"/>
    <property type="evidence" value="ECO:0007669"/>
    <property type="project" value="UniProtKB-UniRule"/>
</dbReference>
<dbReference type="GO" id="GO:0042802">
    <property type="term" value="F:identical protein binding"/>
    <property type="evidence" value="ECO:0007669"/>
    <property type="project" value="TreeGrafter"/>
</dbReference>
<dbReference type="GO" id="GO:0005975">
    <property type="term" value="P:carbohydrate metabolic process"/>
    <property type="evidence" value="ECO:0007669"/>
    <property type="project" value="InterPro"/>
</dbReference>
<dbReference type="GO" id="GO:0006043">
    <property type="term" value="P:glucosamine catabolic process"/>
    <property type="evidence" value="ECO:0007669"/>
    <property type="project" value="TreeGrafter"/>
</dbReference>
<dbReference type="GO" id="GO:0006046">
    <property type="term" value="P:N-acetylglucosamine catabolic process"/>
    <property type="evidence" value="ECO:0007669"/>
    <property type="project" value="TreeGrafter"/>
</dbReference>
<dbReference type="GO" id="GO:0019262">
    <property type="term" value="P:N-acetylneuraminate catabolic process"/>
    <property type="evidence" value="ECO:0007669"/>
    <property type="project" value="UniProtKB-UniRule"/>
</dbReference>
<dbReference type="CDD" id="cd01399">
    <property type="entry name" value="GlcN6P_deaminase"/>
    <property type="match status" value="1"/>
</dbReference>
<dbReference type="FunFam" id="3.40.50.1360:FF:000002">
    <property type="entry name" value="Glucosamine-6-phosphate deaminase"/>
    <property type="match status" value="1"/>
</dbReference>
<dbReference type="Gene3D" id="3.40.50.1360">
    <property type="match status" value="1"/>
</dbReference>
<dbReference type="HAMAP" id="MF_01241">
    <property type="entry name" value="GlcN6P_deamin"/>
    <property type="match status" value="1"/>
</dbReference>
<dbReference type="InterPro" id="IPR006148">
    <property type="entry name" value="Glc/Gal-6P_isomerase"/>
</dbReference>
<dbReference type="InterPro" id="IPR004547">
    <property type="entry name" value="Glucosamine6P_isomerase"/>
</dbReference>
<dbReference type="InterPro" id="IPR018321">
    <property type="entry name" value="Glucosamine6P_isomerase_CS"/>
</dbReference>
<dbReference type="InterPro" id="IPR037171">
    <property type="entry name" value="NagB/RpiA_transferase-like"/>
</dbReference>
<dbReference type="NCBIfam" id="TIGR00502">
    <property type="entry name" value="nagB"/>
    <property type="match status" value="1"/>
</dbReference>
<dbReference type="NCBIfam" id="NF001685">
    <property type="entry name" value="PRK00443.1-5"/>
    <property type="match status" value="1"/>
</dbReference>
<dbReference type="PANTHER" id="PTHR11280">
    <property type="entry name" value="GLUCOSAMINE-6-PHOSPHATE ISOMERASE"/>
    <property type="match status" value="1"/>
</dbReference>
<dbReference type="PANTHER" id="PTHR11280:SF5">
    <property type="entry name" value="GLUCOSAMINE-6-PHOSPHATE ISOMERASE"/>
    <property type="match status" value="1"/>
</dbReference>
<dbReference type="Pfam" id="PF01182">
    <property type="entry name" value="Glucosamine_iso"/>
    <property type="match status" value="1"/>
</dbReference>
<dbReference type="SUPFAM" id="SSF100950">
    <property type="entry name" value="NagB/RpiA/CoA transferase-like"/>
    <property type="match status" value="1"/>
</dbReference>
<dbReference type="PROSITE" id="PS01161">
    <property type="entry name" value="GLC_GALNAC_ISOMERASE"/>
    <property type="match status" value="1"/>
</dbReference>
<accession>Q1CKN7</accession>
<accession>C4GR48</accession>